<reference key="1">
    <citation type="submission" date="2008-08" db="EMBL/GenBank/DDBJ databases">
        <title>Complete sequence of Vibrio fischeri strain MJ11.</title>
        <authorList>
            <person name="Mandel M.J."/>
            <person name="Stabb E.V."/>
            <person name="Ruby E.G."/>
            <person name="Ferriera S."/>
            <person name="Johnson J."/>
            <person name="Kravitz S."/>
            <person name="Beeson K."/>
            <person name="Sutton G."/>
            <person name="Rogers Y.-H."/>
            <person name="Friedman R."/>
            <person name="Frazier M."/>
            <person name="Venter J.C."/>
        </authorList>
    </citation>
    <scope>NUCLEOTIDE SEQUENCE [LARGE SCALE GENOMIC DNA]</scope>
    <source>
        <strain>MJ11</strain>
    </source>
</reference>
<comment type="function">
    <text evidence="1">Participates actively in the response to hyperosmotic and heat shock by preventing the aggregation of stress-denatured proteins, in association with DnaK and GrpE. It is the nucleotide exchange factor for DnaK and may function as a thermosensor. Unfolded proteins bind initially to DnaJ; upon interaction with the DnaJ-bound protein, DnaK hydrolyzes its bound ATP, resulting in the formation of a stable complex. GrpE releases ADP from DnaK; ATP binding to DnaK triggers the release of the substrate protein, thus completing the reaction cycle. Several rounds of ATP-dependent interactions between DnaJ, DnaK and GrpE are required for fully efficient folding.</text>
</comment>
<comment type="subunit">
    <text evidence="1">Homodimer.</text>
</comment>
<comment type="subcellular location">
    <subcellularLocation>
        <location evidence="1">Cytoplasm</location>
    </subcellularLocation>
</comment>
<comment type="similarity">
    <text evidence="1">Belongs to the GrpE family.</text>
</comment>
<evidence type="ECO:0000255" key="1">
    <source>
        <dbReference type="HAMAP-Rule" id="MF_01151"/>
    </source>
</evidence>
<sequence length="194" mass="21511">MSNEENKVNEEAVVEEQVEAVGTEADVEWNESAEDSQEAKIAELEAALLASQAQIKEQQDTVLRAKAEEQNVRRRAEEDVDKARKYALKKFAGELLPVLDNLERALENGDKENEAAKALLEGVELTLQTFVSTVEKFGLTVINPMGEAFNPELHQAIGMQASPDHESNTVMIVMQKGYTLNDQVLRPAMVMVAQ</sequence>
<keyword id="KW-0143">Chaperone</keyword>
<keyword id="KW-0963">Cytoplasm</keyword>
<keyword id="KW-0346">Stress response</keyword>
<name>GRPE_ALIFM</name>
<dbReference type="EMBL" id="CP001139">
    <property type="protein sequence ID" value="ACH65670.1"/>
    <property type="molecule type" value="Genomic_DNA"/>
</dbReference>
<dbReference type="RefSeq" id="WP_005420631.1">
    <property type="nucleotide sequence ID" value="NC_011184.1"/>
</dbReference>
<dbReference type="SMR" id="B5FA13"/>
<dbReference type="KEGG" id="vfm:VFMJ11_2133"/>
<dbReference type="HOGENOM" id="CLU_057217_6_0_6"/>
<dbReference type="Proteomes" id="UP000001857">
    <property type="component" value="Chromosome I"/>
</dbReference>
<dbReference type="GO" id="GO:0005829">
    <property type="term" value="C:cytosol"/>
    <property type="evidence" value="ECO:0007669"/>
    <property type="project" value="TreeGrafter"/>
</dbReference>
<dbReference type="GO" id="GO:0000774">
    <property type="term" value="F:adenyl-nucleotide exchange factor activity"/>
    <property type="evidence" value="ECO:0007669"/>
    <property type="project" value="InterPro"/>
</dbReference>
<dbReference type="GO" id="GO:0042803">
    <property type="term" value="F:protein homodimerization activity"/>
    <property type="evidence" value="ECO:0007669"/>
    <property type="project" value="InterPro"/>
</dbReference>
<dbReference type="GO" id="GO:0051087">
    <property type="term" value="F:protein-folding chaperone binding"/>
    <property type="evidence" value="ECO:0007669"/>
    <property type="project" value="InterPro"/>
</dbReference>
<dbReference type="GO" id="GO:0051082">
    <property type="term" value="F:unfolded protein binding"/>
    <property type="evidence" value="ECO:0007669"/>
    <property type="project" value="TreeGrafter"/>
</dbReference>
<dbReference type="GO" id="GO:0006457">
    <property type="term" value="P:protein folding"/>
    <property type="evidence" value="ECO:0007669"/>
    <property type="project" value="InterPro"/>
</dbReference>
<dbReference type="CDD" id="cd00446">
    <property type="entry name" value="GrpE"/>
    <property type="match status" value="1"/>
</dbReference>
<dbReference type="FunFam" id="2.30.22.10:FF:000001">
    <property type="entry name" value="Protein GrpE"/>
    <property type="match status" value="1"/>
</dbReference>
<dbReference type="Gene3D" id="3.90.20.20">
    <property type="match status" value="1"/>
</dbReference>
<dbReference type="Gene3D" id="2.30.22.10">
    <property type="entry name" value="Head domain of nucleotide exchange factor GrpE"/>
    <property type="match status" value="1"/>
</dbReference>
<dbReference type="HAMAP" id="MF_01151">
    <property type="entry name" value="GrpE"/>
    <property type="match status" value="1"/>
</dbReference>
<dbReference type="InterPro" id="IPR000740">
    <property type="entry name" value="GrpE"/>
</dbReference>
<dbReference type="InterPro" id="IPR013805">
    <property type="entry name" value="GrpE_coiled_coil"/>
</dbReference>
<dbReference type="InterPro" id="IPR009012">
    <property type="entry name" value="GrpE_head"/>
</dbReference>
<dbReference type="NCBIfam" id="NF010737">
    <property type="entry name" value="PRK14139.1"/>
    <property type="match status" value="1"/>
</dbReference>
<dbReference type="NCBIfam" id="NF010738">
    <property type="entry name" value="PRK14140.1"/>
    <property type="match status" value="1"/>
</dbReference>
<dbReference type="NCBIfam" id="NF010748">
    <property type="entry name" value="PRK14150.1"/>
    <property type="match status" value="1"/>
</dbReference>
<dbReference type="PANTHER" id="PTHR21237">
    <property type="entry name" value="GRPE PROTEIN"/>
    <property type="match status" value="1"/>
</dbReference>
<dbReference type="PANTHER" id="PTHR21237:SF23">
    <property type="entry name" value="GRPE PROTEIN HOMOLOG, MITOCHONDRIAL"/>
    <property type="match status" value="1"/>
</dbReference>
<dbReference type="Pfam" id="PF01025">
    <property type="entry name" value="GrpE"/>
    <property type="match status" value="1"/>
</dbReference>
<dbReference type="PRINTS" id="PR00773">
    <property type="entry name" value="GRPEPROTEIN"/>
</dbReference>
<dbReference type="SUPFAM" id="SSF58014">
    <property type="entry name" value="Coiled-coil domain of nucleotide exchange factor GrpE"/>
    <property type="match status" value="1"/>
</dbReference>
<dbReference type="SUPFAM" id="SSF51064">
    <property type="entry name" value="Head domain of nucleotide exchange factor GrpE"/>
    <property type="match status" value="1"/>
</dbReference>
<dbReference type="PROSITE" id="PS01071">
    <property type="entry name" value="GRPE"/>
    <property type="match status" value="1"/>
</dbReference>
<gene>
    <name evidence="1" type="primary">grpE</name>
    <name type="ordered locus">VFMJ11_2133</name>
</gene>
<protein>
    <recommendedName>
        <fullName evidence="1">Protein GrpE</fullName>
    </recommendedName>
    <alternativeName>
        <fullName evidence="1">HSP-70 cofactor</fullName>
    </alternativeName>
</protein>
<accession>B5FA13</accession>
<proteinExistence type="inferred from homology"/>
<feature type="chain" id="PRO_1000137641" description="Protein GrpE">
    <location>
        <begin position="1"/>
        <end position="194"/>
    </location>
</feature>
<organism>
    <name type="scientific">Aliivibrio fischeri (strain MJ11)</name>
    <name type="common">Vibrio fischeri</name>
    <dbReference type="NCBI Taxonomy" id="388396"/>
    <lineage>
        <taxon>Bacteria</taxon>
        <taxon>Pseudomonadati</taxon>
        <taxon>Pseudomonadota</taxon>
        <taxon>Gammaproteobacteria</taxon>
        <taxon>Vibrionales</taxon>
        <taxon>Vibrionaceae</taxon>
        <taxon>Aliivibrio</taxon>
    </lineage>
</organism>